<comment type="subcellular location">
    <subcellularLocation>
        <location evidence="2">Host membrane</location>
        <topology evidence="2">Single-pass membrane protein</topology>
    </subcellularLocation>
</comment>
<sequence>MFFKNLFPFSIMGGICRKVVLSPTSLFIPTNGDTITADGQEVLFAYPNNCLFVKDLTKVVRNKTIIQEKKYDENHYIIYYDNKELFLPKQIWEPVKSAVNAFIEKGYLDGGILLYGAPGMGKSELAKLISKWLGIGMIQKRADDIMSKYLGESEQNMARLFKEEIPQNLPTIVFMDEVDWLGVRRRFGSTTADTASTTVGQILTVFLQLFQDEVIEKRLPVLFIATTNARLEDLDDAFKRRFPFKIYFTPPSQEMIEYFTDKYIKKTGKDTFVVHGKQLSKKQFVNFIVGTGISIAEFKTLLETQSFDSISSSSTYLRRVIPADIPEKVFDATRVKLNGYISFNCDDFNGRTKFHVASFPWISWAILGSYIMLQCKKPIFELLPTDNLSVEELVSGLKQYEPTFFLMFSSSRDDYRLAILASRLKRERGIDVVFFSEDNKLFPESVMLTPYYDISNISFVNEEEKKQLIDTVIHFYGVEAKPDELNILISSRIKGGNSTSDFLNSLQTYILAKSKITDTEKVKDVVKLY</sequence>
<organismHost>
    <name type="scientific">Acidianus convivator</name>
    <dbReference type="NCBI Taxonomy" id="269667"/>
</organismHost>
<accession>Q3V4U3</accession>
<protein>
    <recommendedName>
        <fullName>Uncharacterized protein ORF529</fullName>
    </recommendedName>
</protein>
<proteinExistence type="predicted"/>
<name>Y529_ATV</name>
<dbReference type="EMBL" id="AJ888457">
    <property type="protein sequence ID" value="CAI59871.1"/>
    <property type="molecule type" value="Genomic_DNA"/>
</dbReference>
<dbReference type="RefSeq" id="YP_319884.1">
    <property type="nucleotide sequence ID" value="NC_007409.1"/>
</dbReference>
<dbReference type="GeneID" id="4484273"/>
<dbReference type="KEGG" id="vg:4484273"/>
<dbReference type="OrthoDB" id="1822at10239"/>
<dbReference type="Proteomes" id="UP000002150">
    <property type="component" value="Genome"/>
</dbReference>
<dbReference type="GO" id="GO:0033644">
    <property type="term" value="C:host cell membrane"/>
    <property type="evidence" value="ECO:0007669"/>
    <property type="project" value="UniProtKB-SubCell"/>
</dbReference>
<dbReference type="GO" id="GO:0016020">
    <property type="term" value="C:membrane"/>
    <property type="evidence" value="ECO:0007669"/>
    <property type="project" value="UniProtKB-KW"/>
</dbReference>
<dbReference type="GO" id="GO:0005524">
    <property type="term" value="F:ATP binding"/>
    <property type="evidence" value="ECO:0007669"/>
    <property type="project" value="InterPro"/>
</dbReference>
<dbReference type="GO" id="GO:0016887">
    <property type="term" value="F:ATP hydrolysis activity"/>
    <property type="evidence" value="ECO:0007669"/>
    <property type="project" value="InterPro"/>
</dbReference>
<dbReference type="CDD" id="cd19481">
    <property type="entry name" value="RecA-like_protease"/>
    <property type="match status" value="1"/>
</dbReference>
<dbReference type="Gene3D" id="3.40.50.300">
    <property type="entry name" value="P-loop containing nucleotide triphosphate hydrolases"/>
    <property type="match status" value="1"/>
</dbReference>
<dbReference type="InterPro" id="IPR003593">
    <property type="entry name" value="AAA+_ATPase"/>
</dbReference>
<dbReference type="InterPro" id="IPR003959">
    <property type="entry name" value="ATPase_AAA_core"/>
</dbReference>
<dbReference type="InterPro" id="IPR050304">
    <property type="entry name" value="MT-severing_AAA_ATPase"/>
</dbReference>
<dbReference type="InterPro" id="IPR027417">
    <property type="entry name" value="P-loop_NTPase"/>
</dbReference>
<dbReference type="PANTHER" id="PTHR23074">
    <property type="entry name" value="AAA DOMAIN-CONTAINING"/>
    <property type="match status" value="1"/>
</dbReference>
<dbReference type="PANTHER" id="PTHR23074:SF83">
    <property type="entry name" value="VACUOLAR PROTEIN SORTING-ASSOCIATED PROTEIN 4A"/>
    <property type="match status" value="1"/>
</dbReference>
<dbReference type="Pfam" id="PF00004">
    <property type="entry name" value="AAA"/>
    <property type="match status" value="1"/>
</dbReference>
<dbReference type="SMART" id="SM00382">
    <property type="entry name" value="AAA"/>
    <property type="match status" value="1"/>
</dbReference>
<dbReference type="SUPFAM" id="SSF52540">
    <property type="entry name" value="P-loop containing nucleoside triphosphate hydrolases"/>
    <property type="match status" value="1"/>
</dbReference>
<keyword id="KW-1043">Host membrane</keyword>
<keyword id="KW-0472">Membrane</keyword>
<keyword id="KW-1185">Reference proteome</keyword>
<keyword id="KW-0812">Transmembrane</keyword>
<keyword id="KW-1133">Transmembrane helix</keyword>
<evidence type="ECO:0000255" key="1"/>
<evidence type="ECO:0000305" key="2"/>
<reference key="1">
    <citation type="journal article" date="2005" name="Nature">
        <title>Virology: independent virus development outside a host.</title>
        <authorList>
            <person name="Haring M."/>
            <person name="Vestergaard G."/>
            <person name="Rachel R."/>
            <person name="Chen L."/>
            <person name="Garrett R.A."/>
            <person name="Prangishvili D."/>
        </authorList>
    </citation>
    <scope>NUCLEOTIDE SEQUENCE [GENOMIC DNA]</scope>
</reference>
<organism>
    <name type="scientific">Acidianus two-tailed virus</name>
    <name type="common">ATV</name>
    <dbReference type="NCBI Taxonomy" id="315953"/>
    <lineage>
        <taxon>Viruses</taxon>
        <taxon>Viruses incertae sedis</taxon>
        <taxon>Bicaudaviridae</taxon>
        <taxon>Bicaudavirus</taxon>
    </lineage>
</organism>
<feature type="chain" id="PRO_0000389033" description="Uncharacterized protein ORF529">
    <location>
        <begin position="1"/>
        <end position="529"/>
    </location>
</feature>
<feature type="transmembrane region" description="Helical" evidence="1">
    <location>
        <begin position="354"/>
        <end position="373"/>
    </location>
</feature>